<proteinExistence type="evidence at protein level"/>
<sequence>MRLSVLLSLLPLALGAPAVEQRSEAAPLIEARGEMVANKYIVKFKEGSALSALDAAMEKISGKPDHVYKNVFSGFAATLDENMVRVLRAHPDVEYIEQDAVVTINAAQTNAPWGLARISSTSPGTSTYYYDESAGQGSCVYVIDTGIEASHPEFEGRAQMVKTYYYSSRDGNGHGTHCAGTVGSRTYGVAKKTQLFGVKVLDDNGSGQYSTIIAGMDFVASDKNNRNCPKGVVASLSLGGGYSSSVNSAAARLQSSGVMVAVAAGNNNADARNYSPASEPSVCTVGASDRYDRRSSFSNYGSVLDIFGPGTSILSTWIGGSTRSISGTSMATPHVAGLAAYLMTLGKTTAASACRYIADTANKGDLSNIPFGTVNLLAYNNYQA</sequence>
<dbReference type="EC" id="3.4.21.64"/>
<dbReference type="EMBL" id="X14689">
    <property type="protein sequence ID" value="CAA32820.1"/>
    <property type="molecule type" value="Genomic_DNA"/>
</dbReference>
<dbReference type="EMBL" id="X14688">
    <property type="protein sequence ID" value="CAA32819.1"/>
    <property type="molecule type" value="mRNA"/>
</dbReference>
<dbReference type="PIR" id="S02142">
    <property type="entry name" value="SUTIKA"/>
</dbReference>
<dbReference type="PDB" id="1BJR">
    <property type="method" value="X-ray"/>
    <property type="resolution" value="2.44 A"/>
    <property type="chains" value="E=106-384"/>
</dbReference>
<dbReference type="PDB" id="1CNM">
    <property type="method" value="X-ray"/>
    <property type="resolution" value="2.20 A"/>
    <property type="chains" value="A=106-384"/>
</dbReference>
<dbReference type="PDB" id="1EGQ">
    <property type="method" value="X-ray"/>
    <property type="resolution" value="1.55 A"/>
    <property type="chains" value="A=106-384"/>
</dbReference>
<dbReference type="PDB" id="1HT3">
    <property type="method" value="X-ray"/>
    <property type="resolution" value="1.80 A"/>
    <property type="chains" value="A=106-384"/>
</dbReference>
<dbReference type="PDB" id="1IC6">
    <property type="method" value="X-ray"/>
    <property type="resolution" value="0.98 A"/>
    <property type="chains" value="A=106-384"/>
</dbReference>
<dbReference type="PDB" id="1OYO">
    <property type="method" value="X-ray"/>
    <property type="resolution" value="2.02 A"/>
    <property type="chains" value="A=106-384"/>
</dbReference>
<dbReference type="PDB" id="1P7V">
    <property type="method" value="X-ray"/>
    <property type="resolution" value="1.08 A"/>
    <property type="chains" value="A=106-384"/>
</dbReference>
<dbReference type="PDB" id="1P7W">
    <property type="method" value="X-ray"/>
    <property type="resolution" value="1.02 A"/>
    <property type="chains" value="A=106-384"/>
</dbReference>
<dbReference type="PDB" id="1PEK">
    <property type="method" value="X-ray"/>
    <property type="resolution" value="2.20 A"/>
    <property type="chains" value="E=106-384"/>
</dbReference>
<dbReference type="PDB" id="1PFG">
    <property type="method" value="X-ray"/>
    <property type="resolution" value="2.50 A"/>
    <property type="chains" value="A=106-384"/>
</dbReference>
<dbReference type="PDB" id="1PJ8">
    <property type="method" value="X-ray"/>
    <property type="resolution" value="2.20 A"/>
    <property type="chains" value="A=106-384"/>
</dbReference>
<dbReference type="PDB" id="1PTK">
    <property type="method" value="X-ray"/>
    <property type="resolution" value="2.40 A"/>
    <property type="chains" value="A=106-384"/>
</dbReference>
<dbReference type="PDB" id="2DP4">
    <property type="method" value="X-ray"/>
    <property type="resolution" value="2.90 A"/>
    <property type="chains" value="E=106-384"/>
</dbReference>
<dbReference type="PDB" id="2DQK">
    <property type="method" value="X-ray"/>
    <property type="resolution" value="1.93 A"/>
    <property type="chains" value="A=106-384"/>
</dbReference>
<dbReference type="PDB" id="2DUJ">
    <property type="method" value="X-ray"/>
    <property type="resolution" value="1.67 A"/>
    <property type="chains" value="A=106-384"/>
</dbReference>
<dbReference type="PDB" id="2G4V">
    <property type="method" value="X-ray"/>
    <property type="resolution" value="2.14 A"/>
    <property type="chains" value="A=106-384"/>
</dbReference>
<dbReference type="PDB" id="2HD4">
    <property type="method" value="X-ray"/>
    <property type="resolution" value="2.15 A"/>
    <property type="chains" value="A=106-384"/>
</dbReference>
<dbReference type="PDB" id="2HPZ">
    <property type="method" value="X-ray"/>
    <property type="resolution" value="1.69 A"/>
    <property type="chains" value="A=106-384"/>
</dbReference>
<dbReference type="PDB" id="2ID8">
    <property type="method" value="X-ray"/>
    <property type="resolution" value="1.27 A"/>
    <property type="chains" value="A=106-384"/>
</dbReference>
<dbReference type="PDB" id="2PKC">
    <property type="method" value="X-ray"/>
    <property type="resolution" value="1.50 A"/>
    <property type="chains" value="A=106-384"/>
</dbReference>
<dbReference type="PDB" id="2PQ2">
    <property type="method" value="X-ray"/>
    <property type="resolution" value="1.82 A"/>
    <property type="chains" value="A=106-384"/>
</dbReference>
<dbReference type="PDB" id="2PRK">
    <property type="method" value="X-ray"/>
    <property type="resolution" value="1.50 A"/>
    <property type="chains" value="A=106-384"/>
</dbReference>
<dbReference type="PDB" id="2PWA">
    <property type="method" value="X-ray"/>
    <property type="resolution" value="0.83 A"/>
    <property type="chains" value="A=106-384"/>
</dbReference>
<dbReference type="PDB" id="2PWB">
    <property type="method" value="X-ray"/>
    <property type="resolution" value="1.90 A"/>
    <property type="chains" value="A=106-384"/>
</dbReference>
<dbReference type="PDB" id="2PYZ">
    <property type="method" value="X-ray"/>
    <property type="resolution" value="1.79 A"/>
    <property type="chains" value="A=106-384"/>
</dbReference>
<dbReference type="PDB" id="2V8B">
    <property type="method" value="X-ray"/>
    <property type="resolution" value="0.94 A"/>
    <property type="chains" value="A=106-384"/>
</dbReference>
<dbReference type="PDB" id="3AJ8">
    <property type="method" value="X-ray"/>
    <property type="resolution" value="1.10 A"/>
    <property type="chains" value="A=106-384"/>
</dbReference>
<dbReference type="PDB" id="3AJ9">
    <property type="method" value="X-ray"/>
    <property type="resolution" value="1.10 A"/>
    <property type="chains" value="A=106-384"/>
</dbReference>
<dbReference type="PDB" id="3D9Q">
    <property type="method" value="X-ray"/>
    <property type="resolution" value="1.43 A"/>
    <property type="chains" value="X=106-384"/>
</dbReference>
<dbReference type="PDB" id="3DDZ">
    <property type="method" value="X-ray"/>
    <property type="resolution" value="1.70 A"/>
    <property type="chains" value="X=106-384"/>
</dbReference>
<dbReference type="PDB" id="3DE0">
    <property type="method" value="X-ray"/>
    <property type="resolution" value="1.90 A"/>
    <property type="chains" value="X=106-384"/>
</dbReference>
<dbReference type="PDB" id="3DE1">
    <property type="method" value="X-ray"/>
    <property type="resolution" value="2.00 A"/>
    <property type="chains" value="X=106-384"/>
</dbReference>
<dbReference type="PDB" id="3DE2">
    <property type="method" value="X-ray"/>
    <property type="resolution" value="2.10 A"/>
    <property type="chains" value="X=106-384"/>
</dbReference>
<dbReference type="PDB" id="3DE3">
    <property type="method" value="X-ray"/>
    <property type="resolution" value="1.43 A"/>
    <property type="chains" value="X=106-384"/>
</dbReference>
<dbReference type="PDB" id="3DE4">
    <property type="method" value="X-ray"/>
    <property type="resolution" value="1.80 A"/>
    <property type="chains" value="X=106-384"/>
</dbReference>
<dbReference type="PDB" id="3DE5">
    <property type="method" value="X-ray"/>
    <property type="resolution" value="2.10 A"/>
    <property type="chains" value="X=106-384"/>
</dbReference>
<dbReference type="PDB" id="3DE6">
    <property type="method" value="X-ray"/>
    <property type="resolution" value="2.20 A"/>
    <property type="chains" value="X=106-384"/>
</dbReference>
<dbReference type="PDB" id="3DE7">
    <property type="method" value="X-ray"/>
    <property type="resolution" value="2.30 A"/>
    <property type="chains" value="X=106-384"/>
</dbReference>
<dbReference type="PDB" id="3DVQ">
    <property type="method" value="X-ray"/>
    <property type="resolution" value="1.02 A"/>
    <property type="chains" value="X=106-384"/>
</dbReference>
<dbReference type="PDB" id="3DVR">
    <property type="method" value="X-ray"/>
    <property type="resolution" value="1.02 A"/>
    <property type="chains" value="X=106-384"/>
</dbReference>
<dbReference type="PDB" id="3DVS">
    <property type="method" value="X-ray"/>
    <property type="resolution" value="1.02 A"/>
    <property type="chains" value="X=106-384"/>
</dbReference>
<dbReference type="PDB" id="3DW1">
    <property type="method" value="X-ray"/>
    <property type="resolution" value="1.03 A"/>
    <property type="chains" value="X=106-384"/>
</dbReference>
<dbReference type="PDB" id="3DW3">
    <property type="method" value="X-ray"/>
    <property type="resolution" value="0.99 A"/>
    <property type="chains" value="X=106-384"/>
</dbReference>
<dbReference type="PDB" id="3DWE">
    <property type="method" value="X-ray"/>
    <property type="resolution" value="0.99 A"/>
    <property type="chains" value="X=106-384"/>
</dbReference>
<dbReference type="PDB" id="3DYB">
    <property type="method" value="X-ray"/>
    <property type="resolution" value="1.32 A"/>
    <property type="chains" value="A=106-384"/>
</dbReference>
<dbReference type="PDB" id="3GT3">
    <property type="method" value="X-ray"/>
    <property type="resolution" value="1.50 A"/>
    <property type="chains" value="A=106-384"/>
</dbReference>
<dbReference type="PDB" id="3GT4">
    <property type="method" value="X-ray"/>
    <property type="resolution" value="1.76 A"/>
    <property type="chains" value="A=106-384"/>
</dbReference>
<dbReference type="PDB" id="3I2Y">
    <property type="method" value="X-ray"/>
    <property type="resolution" value="1.00 A"/>
    <property type="chains" value="X=106-384"/>
</dbReference>
<dbReference type="PDB" id="3I30">
    <property type="method" value="X-ray"/>
    <property type="resolution" value="0.99 A"/>
    <property type="chains" value="X=106-384"/>
</dbReference>
<dbReference type="PDB" id="3I34">
    <property type="method" value="X-ray"/>
    <property type="resolution" value="1.00 A"/>
    <property type="chains" value="X=106-384"/>
</dbReference>
<dbReference type="PDB" id="3I37">
    <property type="method" value="X-ray"/>
    <property type="resolution" value="1.00 A"/>
    <property type="chains" value="X=106-384"/>
</dbReference>
<dbReference type="PDB" id="3L1K">
    <property type="method" value="X-ray"/>
    <property type="resolution" value="1.55 A"/>
    <property type="chains" value="A=106-384"/>
</dbReference>
<dbReference type="PDB" id="3OSZ">
    <property type="method" value="X-ray"/>
    <property type="resolution" value="2.26 A"/>
    <property type="chains" value="A=106-384"/>
</dbReference>
<dbReference type="PDB" id="3PRK">
    <property type="method" value="X-ray"/>
    <property type="resolution" value="2.20 A"/>
    <property type="chains" value="E=106-384"/>
</dbReference>
<dbReference type="PDB" id="3PTL">
    <property type="method" value="X-ray"/>
    <property type="resolution" value="1.30 A"/>
    <property type="chains" value="A=106-384"/>
</dbReference>
<dbReference type="PDB" id="3Q40">
    <property type="method" value="X-ray"/>
    <property type="resolution" value="1.80 A"/>
    <property type="chains" value="A=106-384"/>
</dbReference>
<dbReference type="PDB" id="3Q5G">
    <property type="method" value="X-ray"/>
    <property type="resolution" value="1.77 A"/>
    <property type="chains" value="A=106-384"/>
</dbReference>
<dbReference type="PDB" id="3QMP">
    <property type="method" value="X-ray"/>
    <property type="resolution" value="1.10 A"/>
    <property type="chains" value="A=106-384"/>
</dbReference>
<dbReference type="PDB" id="4B5L">
    <property type="method" value="X-ray"/>
    <property type="resolution" value="1.60 A"/>
    <property type="chains" value="A=106-384"/>
</dbReference>
<dbReference type="PDB" id="4DJ5">
    <property type="method" value="X-ray"/>
    <property type="resolution" value="1.80 A"/>
    <property type="chains" value="X=106-384"/>
</dbReference>
<dbReference type="PDB" id="4FON">
    <property type="method" value="X-ray"/>
    <property type="resolution" value="1.05 A"/>
    <property type="chains" value="A=106-384"/>
</dbReference>
<dbReference type="PDB" id="4WOB">
    <property type="method" value="X-ray"/>
    <property type="resolution" value="1.90 A"/>
    <property type="chains" value="A=106-384"/>
</dbReference>
<dbReference type="PDB" id="4WOC">
    <property type="method" value="X-ray"/>
    <property type="resolution" value="1.60 A"/>
    <property type="chains" value="A=106-384"/>
</dbReference>
<dbReference type="PDB" id="4ZAR">
    <property type="method" value="X-ray"/>
    <property type="resolution" value="1.15 A"/>
    <property type="chains" value="A=106-384"/>
</dbReference>
<dbReference type="PDB" id="5AMX">
    <property type="method" value="X-ray"/>
    <property type="resolution" value="1.01 A"/>
    <property type="chains" value="A=106-384"/>
</dbReference>
<dbReference type="PDB" id="5AVJ">
    <property type="method" value="X-ray"/>
    <property type="resolution" value="1.45 A"/>
    <property type="chains" value="A=106-384"/>
</dbReference>
<dbReference type="PDB" id="5AVK">
    <property type="method" value="X-ray"/>
    <property type="resolution" value="1.45 A"/>
    <property type="chains" value="A=106-384"/>
</dbReference>
<dbReference type="PDB" id="5B1D">
    <property type="method" value="X-ray"/>
    <property type="resolution" value="2.30 A"/>
    <property type="chains" value="A=106-384"/>
</dbReference>
<dbReference type="PDB" id="5B1E">
    <property type="method" value="X-ray"/>
    <property type="resolution" value="2.30 A"/>
    <property type="chains" value="A=106-384"/>
</dbReference>
<dbReference type="PDB" id="5CW1">
    <property type="method" value="X-ray"/>
    <property type="resolution" value="1.45 A"/>
    <property type="chains" value="A=106-384"/>
</dbReference>
<dbReference type="PDB" id="5I9S">
    <property type="method" value="EM"/>
    <property type="resolution" value="1.75 A"/>
    <property type="chains" value="A=106-384"/>
</dbReference>
<dbReference type="PDB" id="5K7S">
    <property type="method" value="EM"/>
    <property type="resolution" value="1.60 A"/>
    <property type="chains" value="A=106-384"/>
</dbReference>
<dbReference type="PDB" id="5KXU">
    <property type="method" value="X-ray"/>
    <property type="resolution" value="1.20 A"/>
    <property type="chains" value="A=106-384"/>
</dbReference>
<dbReference type="PDB" id="5KXV">
    <property type="method" value="X-ray"/>
    <property type="resolution" value="0.98 A"/>
    <property type="chains" value="A=106-384"/>
</dbReference>
<dbReference type="PDB" id="5MJL">
    <property type="method" value="X-ray"/>
    <property type="resolution" value="2.21 A"/>
    <property type="chains" value="A=106-384"/>
</dbReference>
<dbReference type="PDB" id="5ROC">
    <property type="method" value="X-ray"/>
    <property type="resolution" value="1.52 A"/>
    <property type="chains" value="A=106-384"/>
</dbReference>
<dbReference type="PDB" id="5ROD">
    <property type="method" value="X-ray"/>
    <property type="resolution" value="1.04 A"/>
    <property type="chains" value="A=106-384"/>
</dbReference>
<dbReference type="PDB" id="5ROE">
    <property type="method" value="X-ray"/>
    <property type="resolution" value="1.50 A"/>
    <property type="chains" value="A=106-384"/>
</dbReference>
<dbReference type="PDB" id="5ROF">
    <property type="method" value="X-ray"/>
    <property type="resolution" value="1.08 A"/>
    <property type="chains" value="A=106-384"/>
</dbReference>
<dbReference type="PDB" id="5ROG">
    <property type="method" value="X-ray"/>
    <property type="resolution" value="1.08 A"/>
    <property type="chains" value="A=106-384"/>
</dbReference>
<dbReference type="PDB" id="5ROH">
    <property type="method" value="X-ray"/>
    <property type="resolution" value="1.04 A"/>
    <property type="chains" value="A=106-384"/>
</dbReference>
<dbReference type="PDB" id="5ROI">
    <property type="method" value="X-ray"/>
    <property type="resolution" value="1.05 A"/>
    <property type="chains" value="A=106-384"/>
</dbReference>
<dbReference type="PDB" id="5ROJ">
    <property type="method" value="X-ray"/>
    <property type="resolution" value="1.02 A"/>
    <property type="chains" value="A=106-384"/>
</dbReference>
<dbReference type="PDB" id="5ROK">
    <property type="method" value="X-ray"/>
    <property type="resolution" value="1.04 A"/>
    <property type="chains" value="A=106-384"/>
</dbReference>
<dbReference type="PDB" id="5ROL">
    <property type="method" value="X-ray"/>
    <property type="resolution" value="1.22 A"/>
    <property type="chains" value="A=106-384"/>
</dbReference>
<dbReference type="PDB" id="5ROM">
    <property type="method" value="X-ray"/>
    <property type="resolution" value="1.07 A"/>
    <property type="chains" value="A=106-384"/>
</dbReference>
<dbReference type="PDB" id="5RON">
    <property type="method" value="X-ray"/>
    <property type="resolution" value="1.22 A"/>
    <property type="chains" value="A=106-384"/>
</dbReference>
<dbReference type="PDB" id="5ROO">
    <property type="method" value="X-ray"/>
    <property type="resolution" value="1.41 A"/>
    <property type="chains" value="A=106-384"/>
</dbReference>
<dbReference type="PDB" id="5ROP">
    <property type="method" value="X-ray"/>
    <property type="resolution" value="1.64 A"/>
    <property type="chains" value="A=106-384"/>
</dbReference>
<dbReference type="PDB" id="5ROQ">
    <property type="method" value="X-ray"/>
    <property type="resolution" value="1.02 A"/>
    <property type="chains" value="A=106-384"/>
</dbReference>
<dbReference type="PDB" id="5ROR">
    <property type="method" value="X-ray"/>
    <property type="resolution" value="1.22 A"/>
    <property type="chains" value="A=106-384"/>
</dbReference>
<dbReference type="PDB" id="5ROS">
    <property type="method" value="X-ray"/>
    <property type="resolution" value="1.45 A"/>
    <property type="chains" value="A=106-384"/>
</dbReference>
<dbReference type="PDB" id="5ROT">
    <property type="method" value="X-ray"/>
    <property type="resolution" value="1.05 A"/>
    <property type="chains" value="A=106-384"/>
</dbReference>
<dbReference type="PDB" id="5ROU">
    <property type="method" value="X-ray"/>
    <property type="resolution" value="1.06 A"/>
    <property type="chains" value="A=106-384"/>
</dbReference>
<dbReference type="PDB" id="5ROV">
    <property type="method" value="X-ray"/>
    <property type="resolution" value="1.04 A"/>
    <property type="chains" value="A=106-384"/>
</dbReference>
<dbReference type="PDB" id="5ROW">
    <property type="method" value="X-ray"/>
    <property type="resolution" value="1.21 A"/>
    <property type="chains" value="A=106-384"/>
</dbReference>
<dbReference type="PDB" id="5ROX">
    <property type="method" value="X-ray"/>
    <property type="resolution" value="1.12 A"/>
    <property type="chains" value="A=106-384"/>
</dbReference>
<dbReference type="PDB" id="5ROY">
    <property type="method" value="X-ray"/>
    <property type="resolution" value="1.05 A"/>
    <property type="chains" value="A=106-384"/>
</dbReference>
<dbReference type="PDB" id="5ROZ">
    <property type="method" value="X-ray"/>
    <property type="resolution" value="1.14 A"/>
    <property type="chains" value="A=106-384"/>
</dbReference>
<dbReference type="PDB" id="5RP0">
    <property type="method" value="X-ray"/>
    <property type="resolution" value="1.03 A"/>
    <property type="chains" value="A=106-384"/>
</dbReference>
<dbReference type="PDB" id="5RP1">
    <property type="method" value="X-ray"/>
    <property type="resolution" value="1.11 A"/>
    <property type="chains" value="A=106-384"/>
</dbReference>
<dbReference type="PDB" id="5RP2">
    <property type="method" value="X-ray"/>
    <property type="resolution" value="1.10 A"/>
    <property type="chains" value="A=106-384"/>
</dbReference>
<dbReference type="PDB" id="5RP3">
    <property type="method" value="X-ray"/>
    <property type="resolution" value="1.09 A"/>
    <property type="chains" value="A=106-384"/>
</dbReference>
<dbReference type="PDB" id="5RP4">
    <property type="method" value="X-ray"/>
    <property type="resolution" value="1.05 A"/>
    <property type="chains" value="A=106-384"/>
</dbReference>
<dbReference type="PDB" id="5RP5">
    <property type="method" value="X-ray"/>
    <property type="resolution" value="1.09 A"/>
    <property type="chains" value="A=106-384"/>
</dbReference>
<dbReference type="PDB" id="5RP6">
    <property type="method" value="X-ray"/>
    <property type="resolution" value="1.17 A"/>
    <property type="chains" value="A=106-384"/>
</dbReference>
<dbReference type="PDB" id="5RP7">
    <property type="method" value="X-ray"/>
    <property type="resolution" value="1.15 A"/>
    <property type="chains" value="A=106-384"/>
</dbReference>
<dbReference type="PDB" id="5RP8">
    <property type="method" value="X-ray"/>
    <property type="resolution" value="1.03 A"/>
    <property type="chains" value="A=106-384"/>
</dbReference>
<dbReference type="PDB" id="5RP9">
    <property type="method" value="X-ray"/>
    <property type="resolution" value="1.48 A"/>
    <property type="chains" value="A=106-384"/>
</dbReference>
<dbReference type="PDB" id="5RPA">
    <property type="method" value="X-ray"/>
    <property type="resolution" value="1.25 A"/>
    <property type="chains" value="A=106-384"/>
</dbReference>
<dbReference type="PDB" id="5RPB">
    <property type="method" value="X-ray"/>
    <property type="resolution" value="1.64 A"/>
    <property type="chains" value="A=106-384"/>
</dbReference>
<dbReference type="PDB" id="5RPC">
    <property type="method" value="X-ray"/>
    <property type="resolution" value="1.23 A"/>
    <property type="chains" value="A=106-384"/>
</dbReference>
<dbReference type="PDB" id="5RPD">
    <property type="method" value="X-ray"/>
    <property type="resolution" value="1.02 A"/>
    <property type="chains" value="A=106-384"/>
</dbReference>
<dbReference type="PDB" id="5RPE">
    <property type="method" value="X-ray"/>
    <property type="resolution" value="1.02 A"/>
    <property type="chains" value="A=106-384"/>
</dbReference>
<dbReference type="PDB" id="5RPF">
    <property type="method" value="X-ray"/>
    <property type="resolution" value="1.39 A"/>
    <property type="chains" value="A=106-384"/>
</dbReference>
<dbReference type="PDB" id="5RPG">
    <property type="method" value="X-ray"/>
    <property type="resolution" value="1.50 A"/>
    <property type="chains" value="A=106-384"/>
</dbReference>
<dbReference type="PDB" id="5RPH">
    <property type="method" value="X-ray"/>
    <property type="resolution" value="1.38 A"/>
    <property type="chains" value="A=106-384"/>
</dbReference>
<dbReference type="PDB" id="5RPI">
    <property type="method" value="X-ray"/>
    <property type="resolution" value="1.03 A"/>
    <property type="chains" value="A=106-384"/>
</dbReference>
<dbReference type="PDB" id="5RPJ">
    <property type="method" value="X-ray"/>
    <property type="resolution" value="1.27 A"/>
    <property type="chains" value="A=106-384"/>
</dbReference>
<dbReference type="PDB" id="5RPK">
    <property type="method" value="X-ray"/>
    <property type="resolution" value="1.78 A"/>
    <property type="chains" value="A=106-384"/>
</dbReference>
<dbReference type="PDB" id="5RPL">
    <property type="method" value="X-ray"/>
    <property type="resolution" value="1.09 A"/>
    <property type="chains" value="A=106-384"/>
</dbReference>
<dbReference type="PDB" id="5RPM">
    <property type="method" value="X-ray"/>
    <property type="resolution" value="1.22 A"/>
    <property type="chains" value="A=106-384"/>
</dbReference>
<dbReference type="PDB" id="5RPN">
    <property type="method" value="X-ray"/>
    <property type="resolution" value="1.02 A"/>
    <property type="chains" value="A=106-384"/>
</dbReference>
<dbReference type="PDB" id="5RPO">
    <property type="method" value="X-ray"/>
    <property type="resolution" value="1.50 A"/>
    <property type="chains" value="A=106-384"/>
</dbReference>
<dbReference type="PDB" id="5RPP">
    <property type="method" value="X-ray"/>
    <property type="resolution" value="1.08 A"/>
    <property type="chains" value="A=106-384"/>
</dbReference>
<dbReference type="PDB" id="5RPQ">
    <property type="method" value="X-ray"/>
    <property type="resolution" value="1.07 A"/>
    <property type="chains" value="A=106-384"/>
</dbReference>
<dbReference type="PDB" id="5RPR">
    <property type="method" value="X-ray"/>
    <property type="resolution" value="1.16 A"/>
    <property type="chains" value="A=106-384"/>
</dbReference>
<dbReference type="PDB" id="5RPS">
    <property type="method" value="X-ray"/>
    <property type="resolution" value="1.04 A"/>
    <property type="chains" value="A=106-384"/>
</dbReference>
<dbReference type="PDB" id="5RPT">
    <property type="method" value="X-ray"/>
    <property type="resolution" value="1.98 A"/>
    <property type="chains" value="A=106-384"/>
</dbReference>
<dbReference type="PDB" id="5RPU">
    <property type="method" value="X-ray"/>
    <property type="resolution" value="1.55 A"/>
    <property type="chains" value="A=106-384"/>
</dbReference>
<dbReference type="PDB" id="5RPV">
    <property type="method" value="X-ray"/>
    <property type="resolution" value="1.10 A"/>
    <property type="chains" value="A=106-384"/>
</dbReference>
<dbReference type="PDB" id="5RPW">
    <property type="method" value="X-ray"/>
    <property type="resolution" value="1.02 A"/>
    <property type="chains" value="A=106-384"/>
</dbReference>
<dbReference type="PDB" id="5RPX">
    <property type="method" value="X-ray"/>
    <property type="resolution" value="1.05 A"/>
    <property type="chains" value="A=106-384"/>
</dbReference>
<dbReference type="PDB" id="5RPY">
    <property type="method" value="X-ray"/>
    <property type="resolution" value="1.09 A"/>
    <property type="chains" value="A=106-384"/>
</dbReference>
<dbReference type="PDB" id="5RPZ">
    <property type="method" value="X-ray"/>
    <property type="resolution" value="1.22 A"/>
    <property type="chains" value="A=106-384"/>
</dbReference>
<dbReference type="PDB" id="5UVL">
    <property type="method" value="X-ray"/>
    <property type="resolution" value="2.65 A"/>
    <property type="chains" value="A=106-384"/>
</dbReference>
<dbReference type="PDB" id="5WHW">
    <property type="method" value="X-ray"/>
    <property type="resolution" value="1.71 A"/>
    <property type="chains" value="A=106-384"/>
</dbReference>
<dbReference type="PDB" id="5WJG">
    <property type="method" value="X-ray"/>
    <property type="resolution" value="1.50 A"/>
    <property type="chains" value="A=106-384"/>
</dbReference>
<dbReference type="PDB" id="5WJH">
    <property type="method" value="X-ray"/>
    <property type="resolution" value="1.63 A"/>
    <property type="chains" value="A=106-384"/>
</dbReference>
<dbReference type="PDB" id="5WRC">
    <property type="method" value="X-ray"/>
    <property type="resolution" value="1.50 A"/>
    <property type="chains" value="A=106-384"/>
</dbReference>
<dbReference type="PDB" id="6CL7">
    <property type="method" value="EM"/>
    <property type="resolution" value="1.71 A"/>
    <property type="chains" value="A=106-384"/>
</dbReference>
<dbReference type="PDB" id="6CL8">
    <property type="method" value="EM"/>
    <property type="resolution" value="2.00 A"/>
    <property type="chains" value="A=106-384"/>
</dbReference>
<dbReference type="PDB" id="6CL9">
    <property type="method" value="EM"/>
    <property type="resolution" value="2.20 A"/>
    <property type="chains" value="A=106-384"/>
</dbReference>
<dbReference type="PDB" id="6CLA">
    <property type="method" value="EM"/>
    <property type="resolution" value="2.80 A"/>
    <property type="chains" value="A=106-384"/>
</dbReference>
<dbReference type="PDB" id="6CLB">
    <property type="method" value="EM"/>
    <property type="resolution" value="3.20 A"/>
    <property type="chains" value="A=106-384"/>
</dbReference>
<dbReference type="PDB" id="6FJS">
    <property type="method" value="X-ray"/>
    <property type="resolution" value="1.90 A"/>
    <property type="chains" value="A=106-384"/>
</dbReference>
<dbReference type="PDB" id="6J43">
    <property type="method" value="X-ray"/>
    <property type="resolution" value="1.85 A"/>
    <property type="chains" value="A=106-384"/>
</dbReference>
<dbReference type="PDB" id="6K2P">
    <property type="method" value="X-ray"/>
    <property type="resolution" value="1.60 A"/>
    <property type="chains" value="A=106-384"/>
</dbReference>
<dbReference type="PDB" id="6K2R">
    <property type="method" value="X-ray"/>
    <property type="resolution" value="1.60 A"/>
    <property type="chains" value="A=106-384"/>
</dbReference>
<dbReference type="PDB" id="6K2S">
    <property type="method" value="X-ray"/>
    <property type="resolution" value="1.60 A"/>
    <property type="chains" value="A=106-384"/>
</dbReference>
<dbReference type="PDB" id="6K2T">
    <property type="method" value="X-ray"/>
    <property type="resolution" value="1.60 A"/>
    <property type="chains" value="A=106-384"/>
</dbReference>
<dbReference type="PDB" id="6K2V">
    <property type="method" value="X-ray"/>
    <property type="resolution" value="1.60 A"/>
    <property type="chains" value="A=106-384"/>
</dbReference>
<dbReference type="PDB" id="6K2W">
    <property type="method" value="X-ray"/>
    <property type="resolution" value="1.70 A"/>
    <property type="chains" value="A=106-384"/>
</dbReference>
<dbReference type="PDB" id="6K2X">
    <property type="method" value="X-ray"/>
    <property type="resolution" value="1.65 A"/>
    <property type="chains" value="A=106-384"/>
</dbReference>
<dbReference type="PDB" id="6K8M">
    <property type="method" value="X-ray"/>
    <property type="resolution" value="1.45 A"/>
    <property type="chains" value="E=106-384"/>
</dbReference>
<dbReference type="PDB" id="6KKF">
    <property type="method" value="X-ray"/>
    <property type="resolution" value="1.40 A"/>
    <property type="chains" value="A=106-384"/>
</dbReference>
<dbReference type="PDB" id="6LAW">
    <property type="method" value="EM"/>
    <property type="resolution" value="1.50 A"/>
    <property type="chains" value="A=106-384"/>
</dbReference>
<dbReference type="PDB" id="6MH6">
    <property type="method" value="X-ray"/>
    <property type="resolution" value="1.80 A"/>
    <property type="chains" value="A=106-384"/>
</dbReference>
<dbReference type="PDB" id="6N4U">
    <property type="method" value="EM"/>
    <property type="resolution" value="2.75 A"/>
    <property type="chains" value="A=106-384"/>
</dbReference>
<dbReference type="PDB" id="6PKJ">
    <property type="method" value="EM"/>
    <property type="resolution" value="2.18 A"/>
    <property type="chains" value="A=106-384"/>
</dbReference>
<dbReference type="PDB" id="6PKK">
    <property type="method" value="EM"/>
    <property type="resolution" value="2.18 A"/>
    <property type="chains" value="A=106-384"/>
</dbReference>
<dbReference type="PDB" id="6PKL">
    <property type="method" value="EM"/>
    <property type="resolution" value="2.59 A"/>
    <property type="chains" value="A=106-384"/>
</dbReference>
<dbReference type="PDB" id="6PKM">
    <property type="method" value="EM"/>
    <property type="resolution" value="2.17 A"/>
    <property type="chains" value="A=106-384"/>
</dbReference>
<dbReference type="PDB" id="6PKN">
    <property type="method" value="EM"/>
    <property type="resolution" value="2.08 A"/>
    <property type="chains" value="A=106-384"/>
</dbReference>
<dbReference type="PDB" id="6PKO">
    <property type="method" value="EM"/>
    <property type="resolution" value="2.07 A"/>
    <property type="chains" value="A=106-384"/>
</dbReference>
<dbReference type="PDB" id="6PKP">
    <property type="method" value="EM"/>
    <property type="resolution" value="1.91 A"/>
    <property type="chains" value="A=106-384"/>
</dbReference>
<dbReference type="PDB" id="6PKQ">
    <property type="method" value="EM"/>
    <property type="resolution" value="1.85 A"/>
    <property type="chains" value="A=106-384"/>
</dbReference>
<dbReference type="PDB" id="6PKR">
    <property type="method" value="EM"/>
    <property type="resolution" value="1.79 A"/>
    <property type="chains" value="A=106-384"/>
</dbReference>
<dbReference type="PDB" id="6PKS">
    <property type="method" value="EM"/>
    <property type="resolution" value="2.16 A"/>
    <property type="chains" value="A=106-384"/>
</dbReference>
<dbReference type="PDB" id="6PKT">
    <property type="method" value="EM"/>
    <property type="resolution" value="1.85 A"/>
    <property type="chains" value="A=106-384"/>
</dbReference>
<dbReference type="PDB" id="6PQ0">
    <property type="method" value="EM"/>
    <property type="resolution" value="2.00 A"/>
    <property type="chains" value="A=106-384"/>
</dbReference>
<dbReference type="PDB" id="6PQ4">
    <property type="method" value="EM"/>
    <property type="resolution" value="2.00 A"/>
    <property type="chains" value="A=106-384"/>
</dbReference>
<dbReference type="PDB" id="6PU4">
    <property type="method" value="EM"/>
    <property type="resolution" value="2.10 A"/>
    <property type="chains" value="A=106-384"/>
</dbReference>
<dbReference type="PDB" id="6PU5">
    <property type="method" value="EM"/>
    <property type="resolution" value="2.70 A"/>
    <property type="chains" value="A=106-384"/>
</dbReference>
<dbReference type="PDB" id="6QF1">
    <property type="method" value="X-ray"/>
    <property type="resolution" value="1.74 A"/>
    <property type="chains" value="A=106-384"/>
</dbReference>
<dbReference type="PDB" id="6QXV">
    <property type="method" value="X-ray"/>
    <property type="resolution" value="1.94 A"/>
    <property type="chains" value="A=106-384"/>
</dbReference>
<dbReference type="PDB" id="6RUG">
    <property type="method" value="X-ray"/>
    <property type="resolution" value="1.10 A"/>
    <property type="chains" value="A=106-384"/>
</dbReference>
<dbReference type="PDB" id="6RUH">
    <property type="method" value="X-ray"/>
    <property type="resolution" value="1.10 A"/>
    <property type="chains" value="A=106-384"/>
</dbReference>
<dbReference type="PDB" id="6RUK">
    <property type="method" value="X-ray"/>
    <property type="resolution" value="1.20 A"/>
    <property type="chains" value="A=106-384"/>
</dbReference>
<dbReference type="PDB" id="6RUN">
    <property type="method" value="X-ray"/>
    <property type="resolution" value="1.10 A"/>
    <property type="chains" value="A=106-384"/>
</dbReference>
<dbReference type="PDB" id="6RUW">
    <property type="method" value="X-ray"/>
    <property type="resolution" value="1.35 A"/>
    <property type="chains" value="A=106-384"/>
</dbReference>
<dbReference type="PDB" id="6RVE">
    <property type="method" value="X-ray"/>
    <property type="resolution" value="1.15 A"/>
    <property type="chains" value="A=106-384"/>
</dbReference>
<dbReference type="PDB" id="6RVG">
    <property type="method" value="X-ray"/>
    <property type="resolution" value="1.10 A"/>
    <property type="chains" value="A=106-384"/>
</dbReference>
<dbReference type="PDB" id="6RZP">
    <property type="method" value="X-ray"/>
    <property type="resolution" value="2.20 A"/>
    <property type="chains" value="A=106-384"/>
</dbReference>
<dbReference type="PDB" id="6TXG">
    <property type="method" value="X-ray"/>
    <property type="resolution" value="1.37 A"/>
    <property type="chains" value="A=106-384"/>
</dbReference>
<dbReference type="PDB" id="6V8R">
    <property type="method" value="EM"/>
    <property type="resolution" value="1.60 A"/>
    <property type="chains" value="A=106-384"/>
</dbReference>
<dbReference type="PDB" id="6ZET">
    <property type="method" value="EM"/>
    <property type="resolution" value="2.70 A"/>
    <property type="chains" value="AAA=106-384"/>
</dbReference>
<dbReference type="PDB" id="6ZEU">
    <property type="method" value="EM"/>
    <property type="resolution" value="2.00 A"/>
    <property type="chains" value="AAA=106-384"/>
</dbReference>
<dbReference type="PDB" id="6ZEV">
    <property type="method" value="EM"/>
    <property type="resolution" value="2.40 A"/>
    <property type="chains" value="AAA=106-384"/>
</dbReference>
<dbReference type="PDB" id="7A68">
    <property type="method" value="X-ray"/>
    <property type="resolution" value="2.55 A"/>
    <property type="chains" value="A=106-384"/>
</dbReference>
<dbReference type="PDB" id="7A9F">
    <property type="method" value="X-ray"/>
    <property type="resolution" value="1.62 A"/>
    <property type="chains" value="A=106-384"/>
</dbReference>
<dbReference type="PDB" id="7A9K">
    <property type="method" value="X-ray"/>
    <property type="resolution" value="1.62 A"/>
    <property type="chains" value="A=106-384"/>
</dbReference>
<dbReference type="PDB" id="7A9M">
    <property type="method" value="X-ray"/>
    <property type="resolution" value="1.62 A"/>
    <property type="chains" value="A=106-384"/>
</dbReference>
<dbReference type="PDB" id="7C0P">
    <property type="method" value="X-ray"/>
    <property type="resolution" value="2.15 A"/>
    <property type="chains" value="A=106-384"/>
</dbReference>
<dbReference type="PDB" id="7JSY">
    <property type="method" value="EM"/>
    <property type="resolution" value="1.78 A"/>
    <property type="chains" value="A=106-384"/>
</dbReference>
<dbReference type="PDB" id="7LN7">
    <property type="method" value="X-ray"/>
    <property type="resolution" value="1.02 A"/>
    <property type="chains" value="A=106-384"/>
</dbReference>
<dbReference type="PDB" id="7LPT">
    <property type="method" value="X-ray"/>
    <property type="resolution" value="1.43 A"/>
    <property type="chains" value="A=106-384"/>
</dbReference>
<dbReference type="PDB" id="7LPU">
    <property type="method" value="X-ray"/>
    <property type="resolution" value="1.02 A"/>
    <property type="chains" value="A=106-384"/>
</dbReference>
<dbReference type="PDB" id="7LPV">
    <property type="method" value="X-ray"/>
    <property type="resolution" value="1.10 A"/>
    <property type="chains" value="A=106-384"/>
</dbReference>
<dbReference type="PDB" id="7LQ8">
    <property type="method" value="X-ray"/>
    <property type="resolution" value="1.30 A"/>
    <property type="chains" value="A=106-384"/>
</dbReference>
<dbReference type="PDB" id="7LQ9">
    <property type="method" value="X-ray"/>
    <property type="resolution" value="1.43 A"/>
    <property type="chains" value="A=106-384"/>
</dbReference>
<dbReference type="PDB" id="7LQA">
    <property type="method" value="X-ray"/>
    <property type="resolution" value="1.02 A"/>
    <property type="chains" value="A=106-384"/>
</dbReference>
<dbReference type="PDB" id="7LQB">
    <property type="method" value="X-ray"/>
    <property type="resolution" value="1.02 A"/>
    <property type="chains" value="A=106-384"/>
</dbReference>
<dbReference type="PDB" id="7LQC">
    <property type="method" value="X-ray"/>
    <property type="resolution" value="1.02 A"/>
    <property type="chains" value="A=106-384"/>
</dbReference>
<dbReference type="PDB" id="7LTD">
    <property type="method" value="X-ray"/>
    <property type="resolution" value="0.90 A"/>
    <property type="chains" value="A=106-384"/>
</dbReference>
<dbReference type="PDB" id="7LTI">
    <property type="method" value="X-ray"/>
    <property type="resolution" value="0.91 A"/>
    <property type="chains" value="A=106-384"/>
</dbReference>
<dbReference type="PDB" id="7LTV">
    <property type="method" value="X-ray"/>
    <property type="resolution" value="0.95 A"/>
    <property type="chains" value="A=106-384"/>
</dbReference>
<dbReference type="PDB" id="7LU0">
    <property type="method" value="X-ray"/>
    <property type="resolution" value="1.01 A"/>
    <property type="chains" value="A=106-384"/>
</dbReference>
<dbReference type="PDB" id="7LU1">
    <property type="method" value="X-ray"/>
    <property type="resolution" value="1.06 A"/>
    <property type="chains" value="A=106-384"/>
</dbReference>
<dbReference type="PDB" id="7LU2">
    <property type="method" value="X-ray"/>
    <property type="resolution" value="1.11 A"/>
    <property type="chains" value="A=106-384"/>
</dbReference>
<dbReference type="PDB" id="7LU3">
    <property type="method" value="X-ray"/>
    <property type="resolution" value="1.16 A"/>
    <property type="chains" value="A=106-384"/>
</dbReference>
<dbReference type="PDB" id="7NJJ">
    <property type="method" value="X-ray"/>
    <property type="resolution" value="1.65 A"/>
    <property type="chains" value="A=106-384"/>
</dbReference>
<dbReference type="PDB" id="7NUY">
    <property type="method" value="X-ray"/>
    <property type="resolution" value="1.65 A"/>
    <property type="chains" value="A=106-384"/>
</dbReference>
<dbReference type="PDB" id="7NUZ">
    <property type="method" value="X-ray"/>
    <property type="resolution" value="1.09 A"/>
    <property type="chains" value="A=106-384"/>
</dbReference>
<dbReference type="PDB" id="7S4Z">
    <property type="method" value="X-ray"/>
    <property type="resolution" value="1.90 A"/>
    <property type="chains" value="A=106-384"/>
</dbReference>
<dbReference type="PDB" id="7SKX">
    <property type="method" value="EM"/>
    <property type="resolution" value="1.50 A"/>
    <property type="chains" value="C=106-384"/>
</dbReference>
<dbReference type="PDB" id="7SVY">
    <property type="method" value="EM"/>
    <property type="resolution" value="2.30 A"/>
    <property type="chains" value="A=106-384"/>
</dbReference>
<dbReference type="PDB" id="7SVZ">
    <property type="method" value="EM"/>
    <property type="resolution" value="2.00 A"/>
    <property type="chains" value="A=106-384"/>
</dbReference>
<dbReference type="PDB" id="7SW0">
    <property type="method" value="EM"/>
    <property type="resolution" value="2.70 A"/>
    <property type="chains" value="A=106-384"/>
</dbReference>
<dbReference type="PDB" id="7SW1">
    <property type="method" value="EM"/>
    <property type="resolution" value="1.85 A"/>
    <property type="chains" value="A=106-384"/>
</dbReference>
<dbReference type="PDB" id="7SW2">
    <property type="method" value="EM"/>
    <property type="resolution" value="1.95 A"/>
    <property type="chains" value="A=106-384"/>
</dbReference>
<dbReference type="PDB" id="7SW3">
    <property type="method" value="EM"/>
    <property type="resolution" value="2.35 A"/>
    <property type="chains" value="A=106-384"/>
</dbReference>
<dbReference type="PDB" id="7SW4">
    <property type="method" value="EM"/>
    <property type="resolution" value="2.40 A"/>
    <property type="chains" value="A=106-384"/>
</dbReference>
<dbReference type="PDB" id="7SW5">
    <property type="method" value="EM"/>
    <property type="resolution" value="1.95 A"/>
    <property type="chains" value="A=106-384"/>
</dbReference>
<dbReference type="PDB" id="7SW6">
    <property type="method" value="EM"/>
    <property type="resolution" value="1.95 A"/>
    <property type="chains" value="A=106-384"/>
</dbReference>
<dbReference type="PDB" id="7SW7">
    <property type="method" value="EM"/>
    <property type="resolution" value="2.30 A"/>
    <property type="chains" value="A=106-384"/>
</dbReference>
<dbReference type="PDB" id="7SW8">
    <property type="method" value="EM"/>
    <property type="resolution" value="1.90 A"/>
    <property type="chains" value="A=106-384"/>
</dbReference>
<dbReference type="PDB" id="7SW9">
    <property type="method" value="EM"/>
    <property type="resolution" value="2.10 A"/>
    <property type="chains" value="A=106-384"/>
</dbReference>
<dbReference type="PDB" id="7SWA">
    <property type="method" value="EM"/>
    <property type="resolution" value="2.10 A"/>
    <property type="chains" value="A=106-384"/>
</dbReference>
<dbReference type="PDB" id="7SWB">
    <property type="method" value="EM"/>
    <property type="resolution" value="2.05 A"/>
    <property type="chains" value="A=106-384"/>
</dbReference>
<dbReference type="PDB" id="7SWC">
    <property type="method" value="EM"/>
    <property type="resolution" value="2.90 A"/>
    <property type="chains" value="A=106-384"/>
</dbReference>
<dbReference type="PDB" id="8E52">
    <property type="method" value="EM"/>
    <property type="resolution" value="2.80 A"/>
    <property type="chains" value="AAA=106-384"/>
</dbReference>
<dbReference type="PDB" id="8E53">
    <property type="method" value="EM"/>
    <property type="resolution" value="1.70 A"/>
    <property type="chains" value="AAA=106-384"/>
</dbReference>
<dbReference type="PDB" id="8F05">
    <property type="method" value="X-ray"/>
    <property type="resolution" value="1.80 A"/>
    <property type="chains" value="A=106-384"/>
</dbReference>
<dbReference type="PDB" id="8F06">
    <property type="method" value="X-ray"/>
    <property type="resolution" value="1.80 A"/>
    <property type="chains" value="A=106-384"/>
</dbReference>
<dbReference type="PDB" id="8F07">
    <property type="method" value="X-ray"/>
    <property type="resolution" value="1.05 A"/>
    <property type="chains" value="A=106-384"/>
</dbReference>
<dbReference type="PDB" id="8FYO">
    <property type="method" value="EM"/>
    <property type="resolution" value="1.39 A"/>
    <property type="chains" value="A=106-384"/>
</dbReference>
<dbReference type="PDB" id="8FYP">
    <property type="method" value="EM"/>
    <property type="resolution" value="1.45 A"/>
    <property type="chains" value="A=106-384"/>
</dbReference>
<dbReference type="PDB" id="8FYQ">
    <property type="method" value="EM"/>
    <property type="resolution" value="1.40 A"/>
    <property type="chains" value="A=106-384"/>
</dbReference>
<dbReference type="PDB" id="8FYR">
    <property type="method" value="EM"/>
    <property type="resolution" value="1.50 A"/>
    <property type="chains" value="A=106-384"/>
</dbReference>
<dbReference type="PDB" id="8FYS">
    <property type="method" value="EM"/>
    <property type="resolution" value="1.80 A"/>
    <property type="chains" value="A=106-384"/>
</dbReference>
<dbReference type="PDB" id="8RSE">
    <property type="method" value="X-ray"/>
    <property type="resolution" value="1.66 A"/>
    <property type="chains" value="A=1-384"/>
</dbReference>
<dbReference type="PDB" id="8RSF">
    <property type="method" value="X-ray"/>
    <property type="resolution" value="1.66 A"/>
    <property type="chains" value="A=1-384"/>
</dbReference>
<dbReference type="PDB" id="8RSG">
    <property type="method" value="X-ray"/>
    <property type="resolution" value="1.66 A"/>
    <property type="chains" value="A=1-384"/>
</dbReference>
<dbReference type="PDB" id="8SDK">
    <property type="method" value="EM"/>
    <property type="resolution" value="2.10 A"/>
    <property type="chains" value="A=106-384"/>
</dbReference>
<dbReference type="PDB" id="8SOG">
    <property type="method" value="X-ray"/>
    <property type="resolution" value="1.13 A"/>
    <property type="chains" value="A=106-384"/>
</dbReference>
<dbReference type="PDB" id="8SOU">
    <property type="method" value="X-ray"/>
    <property type="resolution" value="1.54 A"/>
    <property type="chains" value="A=106-384"/>
</dbReference>
<dbReference type="PDB" id="8SOV">
    <property type="method" value="X-ray"/>
    <property type="resolution" value="1.29 A"/>
    <property type="chains" value="A=106-384"/>
</dbReference>
<dbReference type="PDB" id="8SPL">
    <property type="method" value="X-ray"/>
    <property type="resolution" value="1.21 A"/>
    <property type="chains" value="A=106-384"/>
</dbReference>
<dbReference type="PDB" id="8SQV">
    <property type="method" value="X-ray"/>
    <property type="resolution" value="1.22 A"/>
    <property type="chains" value="A=106-384"/>
</dbReference>
<dbReference type="PDB" id="9FTX">
    <property type="method" value="X-ray"/>
    <property type="resolution" value="2.00 A"/>
    <property type="chains" value="A=106-384"/>
</dbReference>
<dbReference type="PDB" id="9FTY">
    <property type="method" value="X-ray"/>
    <property type="resolution" value="2.00 A"/>
    <property type="chains" value="A=106-384"/>
</dbReference>
<dbReference type="PDB" id="9FU1">
    <property type="method" value="X-ray"/>
    <property type="resolution" value="2.00 A"/>
    <property type="chains" value="A=106-384"/>
</dbReference>
<dbReference type="PDBsum" id="1BJR"/>
<dbReference type="PDBsum" id="1CNM"/>
<dbReference type="PDBsum" id="1EGQ"/>
<dbReference type="PDBsum" id="1HT3"/>
<dbReference type="PDBsum" id="1IC6"/>
<dbReference type="PDBsum" id="1OYO"/>
<dbReference type="PDBsum" id="1P7V"/>
<dbReference type="PDBsum" id="1P7W"/>
<dbReference type="PDBsum" id="1PEK"/>
<dbReference type="PDBsum" id="1PFG"/>
<dbReference type="PDBsum" id="1PJ8"/>
<dbReference type="PDBsum" id="1PTK"/>
<dbReference type="PDBsum" id="2DP4"/>
<dbReference type="PDBsum" id="2DQK"/>
<dbReference type="PDBsum" id="2DUJ"/>
<dbReference type="PDBsum" id="2G4V"/>
<dbReference type="PDBsum" id="2HD4"/>
<dbReference type="PDBsum" id="2HPZ"/>
<dbReference type="PDBsum" id="2ID8"/>
<dbReference type="PDBsum" id="2PKC"/>
<dbReference type="PDBsum" id="2PQ2"/>
<dbReference type="PDBsum" id="2PRK"/>
<dbReference type="PDBsum" id="2PWA"/>
<dbReference type="PDBsum" id="2PWB"/>
<dbReference type="PDBsum" id="2PYZ"/>
<dbReference type="PDBsum" id="2V8B"/>
<dbReference type="PDBsum" id="3AJ8"/>
<dbReference type="PDBsum" id="3AJ9"/>
<dbReference type="PDBsum" id="3D9Q"/>
<dbReference type="PDBsum" id="3DDZ"/>
<dbReference type="PDBsum" id="3DE0"/>
<dbReference type="PDBsum" id="3DE1"/>
<dbReference type="PDBsum" id="3DE2"/>
<dbReference type="PDBsum" id="3DE3"/>
<dbReference type="PDBsum" id="3DE4"/>
<dbReference type="PDBsum" id="3DE5"/>
<dbReference type="PDBsum" id="3DE6"/>
<dbReference type="PDBsum" id="3DE7"/>
<dbReference type="PDBsum" id="3DVQ"/>
<dbReference type="PDBsum" id="3DVR"/>
<dbReference type="PDBsum" id="3DVS"/>
<dbReference type="PDBsum" id="3DW1"/>
<dbReference type="PDBsum" id="3DW3"/>
<dbReference type="PDBsum" id="3DWE"/>
<dbReference type="PDBsum" id="3DYB"/>
<dbReference type="PDBsum" id="3GT3"/>
<dbReference type="PDBsum" id="3GT4"/>
<dbReference type="PDBsum" id="3I2Y"/>
<dbReference type="PDBsum" id="3I30"/>
<dbReference type="PDBsum" id="3I34"/>
<dbReference type="PDBsum" id="3I37"/>
<dbReference type="PDBsum" id="3L1K"/>
<dbReference type="PDBsum" id="3OSZ"/>
<dbReference type="PDBsum" id="3PRK"/>
<dbReference type="PDBsum" id="3PTL"/>
<dbReference type="PDBsum" id="3Q40"/>
<dbReference type="PDBsum" id="3Q5G"/>
<dbReference type="PDBsum" id="3QMP"/>
<dbReference type="PDBsum" id="4B5L"/>
<dbReference type="PDBsum" id="4DJ5"/>
<dbReference type="PDBsum" id="4FON"/>
<dbReference type="PDBsum" id="4WOB"/>
<dbReference type="PDBsum" id="4WOC"/>
<dbReference type="PDBsum" id="4ZAR"/>
<dbReference type="PDBsum" id="5AMX"/>
<dbReference type="PDBsum" id="5AVJ"/>
<dbReference type="PDBsum" id="5AVK"/>
<dbReference type="PDBsum" id="5B1D"/>
<dbReference type="PDBsum" id="5B1E"/>
<dbReference type="PDBsum" id="5CW1"/>
<dbReference type="PDBsum" id="5I9S"/>
<dbReference type="PDBsum" id="5K7S"/>
<dbReference type="PDBsum" id="5KXU"/>
<dbReference type="PDBsum" id="5KXV"/>
<dbReference type="PDBsum" id="5MJL"/>
<dbReference type="PDBsum" id="5ROC"/>
<dbReference type="PDBsum" id="5ROD"/>
<dbReference type="PDBsum" id="5ROE"/>
<dbReference type="PDBsum" id="5ROF"/>
<dbReference type="PDBsum" id="5ROG"/>
<dbReference type="PDBsum" id="5ROH"/>
<dbReference type="PDBsum" id="5ROI"/>
<dbReference type="PDBsum" id="5ROJ"/>
<dbReference type="PDBsum" id="5ROK"/>
<dbReference type="PDBsum" id="5ROL"/>
<dbReference type="PDBsum" id="5ROM"/>
<dbReference type="PDBsum" id="5RON"/>
<dbReference type="PDBsum" id="5ROO"/>
<dbReference type="PDBsum" id="5ROP"/>
<dbReference type="PDBsum" id="5ROQ"/>
<dbReference type="PDBsum" id="5ROR"/>
<dbReference type="PDBsum" id="5ROS"/>
<dbReference type="PDBsum" id="5ROT"/>
<dbReference type="PDBsum" id="5ROU"/>
<dbReference type="PDBsum" id="5ROV"/>
<dbReference type="PDBsum" id="5ROW"/>
<dbReference type="PDBsum" id="5ROX"/>
<dbReference type="PDBsum" id="5ROY"/>
<dbReference type="PDBsum" id="5ROZ"/>
<dbReference type="PDBsum" id="5RP0"/>
<dbReference type="PDBsum" id="5RP1"/>
<dbReference type="PDBsum" id="5RP2"/>
<dbReference type="PDBsum" id="5RP3"/>
<dbReference type="PDBsum" id="5RP4"/>
<dbReference type="PDBsum" id="5RP5"/>
<dbReference type="PDBsum" id="5RP6"/>
<dbReference type="PDBsum" id="5RP7"/>
<dbReference type="PDBsum" id="5RP8"/>
<dbReference type="PDBsum" id="5RP9"/>
<dbReference type="PDBsum" id="5RPA"/>
<dbReference type="PDBsum" id="5RPB"/>
<dbReference type="PDBsum" id="5RPC"/>
<dbReference type="PDBsum" id="5RPD"/>
<dbReference type="PDBsum" id="5RPE"/>
<dbReference type="PDBsum" id="5RPF"/>
<dbReference type="PDBsum" id="5RPG"/>
<dbReference type="PDBsum" id="5RPH"/>
<dbReference type="PDBsum" id="5RPI"/>
<dbReference type="PDBsum" id="5RPJ"/>
<dbReference type="PDBsum" id="5RPK"/>
<dbReference type="PDBsum" id="5RPL"/>
<dbReference type="PDBsum" id="5RPM"/>
<dbReference type="PDBsum" id="5RPN"/>
<dbReference type="PDBsum" id="5RPO"/>
<dbReference type="PDBsum" id="5RPP"/>
<dbReference type="PDBsum" id="5RPQ"/>
<dbReference type="PDBsum" id="5RPR"/>
<dbReference type="PDBsum" id="5RPS"/>
<dbReference type="PDBsum" id="5RPT"/>
<dbReference type="PDBsum" id="5RPU"/>
<dbReference type="PDBsum" id="5RPV"/>
<dbReference type="PDBsum" id="5RPW"/>
<dbReference type="PDBsum" id="5RPX"/>
<dbReference type="PDBsum" id="5RPY"/>
<dbReference type="PDBsum" id="5RPZ"/>
<dbReference type="PDBsum" id="5UVL"/>
<dbReference type="PDBsum" id="5WHW"/>
<dbReference type="PDBsum" id="5WJG"/>
<dbReference type="PDBsum" id="5WJH"/>
<dbReference type="PDBsum" id="5WRC"/>
<dbReference type="PDBsum" id="6CL7"/>
<dbReference type="PDBsum" id="6CL8"/>
<dbReference type="PDBsum" id="6CL9"/>
<dbReference type="PDBsum" id="6CLA"/>
<dbReference type="PDBsum" id="6CLB"/>
<dbReference type="PDBsum" id="6FJS"/>
<dbReference type="PDBsum" id="6J43"/>
<dbReference type="PDBsum" id="6K2P"/>
<dbReference type="PDBsum" id="6K2R"/>
<dbReference type="PDBsum" id="6K2S"/>
<dbReference type="PDBsum" id="6K2T"/>
<dbReference type="PDBsum" id="6K2V"/>
<dbReference type="PDBsum" id="6K2W"/>
<dbReference type="PDBsum" id="6K2X"/>
<dbReference type="PDBsum" id="6K8M"/>
<dbReference type="PDBsum" id="6KKF"/>
<dbReference type="PDBsum" id="6LAW"/>
<dbReference type="PDBsum" id="6MH6"/>
<dbReference type="PDBsum" id="6N4U"/>
<dbReference type="PDBsum" id="6PKJ"/>
<dbReference type="PDBsum" id="6PKK"/>
<dbReference type="PDBsum" id="6PKL"/>
<dbReference type="PDBsum" id="6PKM"/>
<dbReference type="PDBsum" id="6PKN"/>
<dbReference type="PDBsum" id="6PKO"/>
<dbReference type="PDBsum" id="6PKP"/>
<dbReference type="PDBsum" id="6PKQ"/>
<dbReference type="PDBsum" id="6PKR"/>
<dbReference type="PDBsum" id="6PKS"/>
<dbReference type="PDBsum" id="6PKT"/>
<dbReference type="PDBsum" id="6PQ0"/>
<dbReference type="PDBsum" id="6PQ4"/>
<dbReference type="PDBsum" id="6PU4"/>
<dbReference type="PDBsum" id="6PU5"/>
<dbReference type="PDBsum" id="6QF1"/>
<dbReference type="PDBsum" id="6QXV"/>
<dbReference type="PDBsum" id="6RUG"/>
<dbReference type="PDBsum" id="6RUH"/>
<dbReference type="PDBsum" id="6RUK"/>
<dbReference type="PDBsum" id="6RUN"/>
<dbReference type="PDBsum" id="6RUW"/>
<dbReference type="PDBsum" id="6RVE"/>
<dbReference type="PDBsum" id="6RVG"/>
<dbReference type="PDBsum" id="6RZP"/>
<dbReference type="PDBsum" id="6TXG"/>
<dbReference type="PDBsum" id="6V8R"/>
<dbReference type="PDBsum" id="6ZET"/>
<dbReference type="PDBsum" id="6ZEU"/>
<dbReference type="PDBsum" id="6ZEV"/>
<dbReference type="PDBsum" id="7A68"/>
<dbReference type="PDBsum" id="7A9F"/>
<dbReference type="PDBsum" id="7A9K"/>
<dbReference type="PDBsum" id="7A9M"/>
<dbReference type="PDBsum" id="7C0P"/>
<dbReference type="PDBsum" id="7JSY"/>
<dbReference type="PDBsum" id="7LN7"/>
<dbReference type="PDBsum" id="7LPT"/>
<dbReference type="PDBsum" id="7LPU"/>
<dbReference type="PDBsum" id="7LPV"/>
<dbReference type="PDBsum" id="7LQ8"/>
<dbReference type="PDBsum" id="7LQ9"/>
<dbReference type="PDBsum" id="7LQA"/>
<dbReference type="PDBsum" id="7LQB"/>
<dbReference type="PDBsum" id="7LQC"/>
<dbReference type="PDBsum" id="7LTD"/>
<dbReference type="PDBsum" id="7LTI"/>
<dbReference type="PDBsum" id="7LTV"/>
<dbReference type="PDBsum" id="7LU0"/>
<dbReference type="PDBsum" id="7LU1"/>
<dbReference type="PDBsum" id="7LU2"/>
<dbReference type="PDBsum" id="7LU3"/>
<dbReference type="PDBsum" id="7NJJ"/>
<dbReference type="PDBsum" id="7NUY"/>
<dbReference type="PDBsum" id="7NUZ"/>
<dbReference type="PDBsum" id="7S4Z"/>
<dbReference type="PDBsum" id="7SKX"/>
<dbReference type="PDBsum" id="7SVY"/>
<dbReference type="PDBsum" id="7SVZ"/>
<dbReference type="PDBsum" id="7SW0"/>
<dbReference type="PDBsum" id="7SW1"/>
<dbReference type="PDBsum" id="7SW2"/>
<dbReference type="PDBsum" id="7SW3"/>
<dbReference type="PDBsum" id="7SW4"/>
<dbReference type="PDBsum" id="7SW5"/>
<dbReference type="PDBsum" id="7SW6"/>
<dbReference type="PDBsum" id="7SW7"/>
<dbReference type="PDBsum" id="7SW8"/>
<dbReference type="PDBsum" id="7SW9"/>
<dbReference type="PDBsum" id="7SWA"/>
<dbReference type="PDBsum" id="7SWB"/>
<dbReference type="PDBsum" id="7SWC"/>
<dbReference type="PDBsum" id="8E52"/>
<dbReference type="PDBsum" id="8E53"/>
<dbReference type="PDBsum" id="8F05"/>
<dbReference type="PDBsum" id="8F06"/>
<dbReference type="PDBsum" id="8F07"/>
<dbReference type="PDBsum" id="8FYO"/>
<dbReference type="PDBsum" id="8FYP"/>
<dbReference type="PDBsum" id="8FYQ"/>
<dbReference type="PDBsum" id="8FYR"/>
<dbReference type="PDBsum" id="8FYS"/>
<dbReference type="PDBsum" id="8RSE"/>
<dbReference type="PDBsum" id="8RSF"/>
<dbReference type="PDBsum" id="8RSG"/>
<dbReference type="PDBsum" id="8SDK"/>
<dbReference type="PDBsum" id="8SOG"/>
<dbReference type="PDBsum" id="8SOU"/>
<dbReference type="PDBsum" id="8SOV"/>
<dbReference type="PDBsum" id="8SPL"/>
<dbReference type="PDBsum" id="8SQV"/>
<dbReference type="PDBsum" id="9FTX"/>
<dbReference type="PDBsum" id="9FTY"/>
<dbReference type="PDBsum" id="9FU1"/>
<dbReference type="EMDB" id="EMD-0343"/>
<dbReference type="EMDB" id="EMD-0865"/>
<dbReference type="EMDB" id="EMD-20356"/>
<dbReference type="EMDB" id="EMD-20357"/>
<dbReference type="EMDB" id="EMD-20358"/>
<dbReference type="EMDB" id="EMD-20359"/>
<dbReference type="EMDB" id="EMD-20360"/>
<dbReference type="EMDB" id="EMD-20361"/>
<dbReference type="EMDB" id="EMD-20362"/>
<dbReference type="EMDB" id="EMD-20363"/>
<dbReference type="EMDB" id="EMD-20364"/>
<dbReference type="EMDB" id="EMD-20365"/>
<dbReference type="EMDB" id="EMD-20366"/>
<dbReference type="EMDB" id="EMD-20475"/>
<dbReference type="EMDB" id="EMD-20476"/>
<dbReference type="EMDB" id="EMD-21109"/>
<dbReference type="EMDB" id="EMD-22463"/>
<dbReference type="EMDB" id="EMD-25185"/>
<dbReference type="EMDB" id="EMD-25456"/>
<dbReference type="EMDB" id="EMD-25457"/>
<dbReference type="EMDB" id="EMD-25458"/>
<dbReference type="EMDB" id="EMD-25459"/>
<dbReference type="EMDB" id="EMD-25460"/>
<dbReference type="EMDB" id="EMD-25461"/>
<dbReference type="EMDB" id="EMD-25462"/>
<dbReference type="EMDB" id="EMD-25463"/>
<dbReference type="EMDB" id="EMD-25464"/>
<dbReference type="EMDB" id="EMD-25465"/>
<dbReference type="EMDB" id="EMD-25466"/>
<dbReference type="EMDB" id="EMD-25467"/>
<dbReference type="EMDB" id="EMD-25468"/>
<dbReference type="EMDB" id="EMD-25469"/>
<dbReference type="EMDB" id="EMD-25470"/>
<dbReference type="EMDB" id="EMD-27900"/>
<dbReference type="EMDB" id="EMD-27901"/>
<dbReference type="EMDB" id="EMD-29587"/>
<dbReference type="EMDB" id="EMD-29588"/>
<dbReference type="EMDB" id="EMD-29590"/>
<dbReference type="EMDB" id="EMD-29595"/>
<dbReference type="EMDB" id="EMD-29596"/>
<dbReference type="EMDB" id="EMD-40351"/>
<dbReference type="EMDB" id="EMD-7490"/>
<dbReference type="EMDB" id="EMD-7491"/>
<dbReference type="EMDB" id="EMD-7492"/>
<dbReference type="EMDB" id="EMD-7493"/>
<dbReference type="EMDB" id="EMD-7494"/>
<dbReference type="EMDB" id="EMD-8077"/>
<dbReference type="EMDB" id="EMD-8221"/>
<dbReference type="SMR" id="P06873"/>
<dbReference type="BindingDB" id="P06873"/>
<dbReference type="ChEMBL" id="CHEMBL1075070"/>
<dbReference type="Allergome" id="8265">
    <property type="allergen name" value="Tri al Proteinase K"/>
</dbReference>
<dbReference type="MEROPS" id="S08.054"/>
<dbReference type="BRENDA" id="3.4.21.64">
    <property type="organism ID" value="6510"/>
</dbReference>
<dbReference type="EvolutionaryTrace" id="P06873"/>
<dbReference type="GO" id="GO:0005576">
    <property type="term" value="C:extracellular region"/>
    <property type="evidence" value="ECO:0007669"/>
    <property type="project" value="UniProtKB-ARBA"/>
</dbReference>
<dbReference type="GO" id="GO:0046872">
    <property type="term" value="F:metal ion binding"/>
    <property type="evidence" value="ECO:0007669"/>
    <property type="project" value="UniProtKB-KW"/>
</dbReference>
<dbReference type="GO" id="GO:0004252">
    <property type="term" value="F:serine-type endopeptidase activity"/>
    <property type="evidence" value="ECO:0007669"/>
    <property type="project" value="InterPro"/>
</dbReference>
<dbReference type="GO" id="GO:0006508">
    <property type="term" value="P:proteolysis"/>
    <property type="evidence" value="ECO:0007669"/>
    <property type="project" value="UniProtKB-KW"/>
</dbReference>
<dbReference type="CDD" id="cd04077">
    <property type="entry name" value="Peptidases_S8_PCSK9_ProteinaseK_like"/>
    <property type="match status" value="1"/>
</dbReference>
<dbReference type="FunFam" id="3.40.50.200:FF:000014">
    <property type="entry name" value="Proteinase K"/>
    <property type="match status" value="1"/>
</dbReference>
<dbReference type="Gene3D" id="3.30.70.80">
    <property type="entry name" value="Peptidase S8 propeptide/proteinase inhibitor I9"/>
    <property type="match status" value="1"/>
</dbReference>
<dbReference type="Gene3D" id="3.40.50.200">
    <property type="entry name" value="Peptidase S8/S53 domain"/>
    <property type="match status" value="1"/>
</dbReference>
<dbReference type="InterPro" id="IPR034193">
    <property type="entry name" value="PCSK9_ProteinaseK-like"/>
</dbReference>
<dbReference type="InterPro" id="IPR000209">
    <property type="entry name" value="Peptidase_S8/S53_dom"/>
</dbReference>
<dbReference type="InterPro" id="IPR036852">
    <property type="entry name" value="Peptidase_S8/S53_dom_sf"/>
</dbReference>
<dbReference type="InterPro" id="IPR023827">
    <property type="entry name" value="Peptidase_S8_Asp-AS"/>
</dbReference>
<dbReference type="InterPro" id="IPR022398">
    <property type="entry name" value="Peptidase_S8_His-AS"/>
</dbReference>
<dbReference type="InterPro" id="IPR023828">
    <property type="entry name" value="Peptidase_S8_Ser-AS"/>
</dbReference>
<dbReference type="InterPro" id="IPR050131">
    <property type="entry name" value="Peptidase_S8_subtilisin-like"/>
</dbReference>
<dbReference type="InterPro" id="IPR015500">
    <property type="entry name" value="Peptidase_S8_subtilisin-rel"/>
</dbReference>
<dbReference type="InterPro" id="IPR010259">
    <property type="entry name" value="S8pro/Inhibitor_I9"/>
</dbReference>
<dbReference type="InterPro" id="IPR037045">
    <property type="entry name" value="S8pro/Inhibitor_I9_sf"/>
</dbReference>
<dbReference type="PANTHER" id="PTHR43806:SF58">
    <property type="entry name" value="ALKALINE PROTEASE 1-RELATED"/>
    <property type="match status" value="1"/>
</dbReference>
<dbReference type="PANTHER" id="PTHR43806">
    <property type="entry name" value="PEPTIDASE S8"/>
    <property type="match status" value="1"/>
</dbReference>
<dbReference type="Pfam" id="PF05922">
    <property type="entry name" value="Inhibitor_I9"/>
    <property type="match status" value="1"/>
</dbReference>
<dbReference type="Pfam" id="PF00082">
    <property type="entry name" value="Peptidase_S8"/>
    <property type="match status" value="1"/>
</dbReference>
<dbReference type="PRINTS" id="PR00723">
    <property type="entry name" value="SUBTILISIN"/>
</dbReference>
<dbReference type="SUPFAM" id="SSF54897">
    <property type="entry name" value="Protease propeptides/inhibitors"/>
    <property type="match status" value="1"/>
</dbReference>
<dbReference type="SUPFAM" id="SSF52743">
    <property type="entry name" value="Subtilisin-like"/>
    <property type="match status" value="1"/>
</dbReference>
<dbReference type="PROSITE" id="PS51892">
    <property type="entry name" value="SUBTILASE"/>
    <property type="match status" value="1"/>
</dbReference>
<dbReference type="PROSITE" id="PS00136">
    <property type="entry name" value="SUBTILASE_ASP"/>
    <property type="match status" value="1"/>
</dbReference>
<dbReference type="PROSITE" id="PS00137">
    <property type="entry name" value="SUBTILASE_HIS"/>
    <property type="match status" value="1"/>
</dbReference>
<dbReference type="PROSITE" id="PS00138">
    <property type="entry name" value="SUBTILASE_SER"/>
    <property type="match status" value="1"/>
</dbReference>
<name>PRTK_PARAQ</name>
<comment type="function">
    <text>Hydrolyzes keratin at aromatic and hydrophobic residues.</text>
</comment>
<comment type="catalytic activity">
    <reaction>
        <text>Hydrolysis of keratin, and of other proteins with subtilisin-like specificity. Hydrolyzes peptide amides.</text>
        <dbReference type="EC" id="3.4.21.64"/>
    </reaction>
</comment>
<comment type="cofactor">
    <cofactor>
        <name>Ca(2+)</name>
        <dbReference type="ChEBI" id="CHEBI:29108"/>
    </cofactor>
    <text>Binds 2 calcium ions per subunit.</text>
</comment>
<comment type="similarity">
    <text evidence="5">Belongs to the peptidase S8 family.</text>
</comment>
<comment type="online information" name="Worthington enzyme manual">
    <link uri="https://www.worthington-biochem.com/PROK/"/>
</comment>
<feature type="signal peptide">
    <location>
        <begin position="1"/>
        <end position="15"/>
    </location>
</feature>
<feature type="propeptide" id="PRO_0000027138" evidence="3 4">
    <location>
        <begin position="16"/>
        <end position="105"/>
    </location>
</feature>
<feature type="chain" id="PRO_0000027139" description="Proteinase K">
    <location>
        <begin position="106"/>
        <end position="384"/>
    </location>
</feature>
<feature type="domain" description="Inhibitor I9" evidence="1">
    <location>
        <begin position="39"/>
        <end position="104"/>
    </location>
</feature>
<feature type="domain" description="Peptidase S8" evidence="2">
    <location>
        <begin position="112"/>
        <end position="384"/>
    </location>
</feature>
<feature type="active site" description="Charge relay system" evidence="2">
    <location>
        <position position="144"/>
    </location>
</feature>
<feature type="active site" description="Charge relay system" evidence="2">
    <location>
        <position position="174"/>
    </location>
</feature>
<feature type="active site" description="Charge relay system" evidence="2">
    <location>
        <position position="329"/>
    </location>
</feature>
<feature type="binding site">
    <location>
        <position position="121"/>
    </location>
    <ligand>
        <name>Ca(2+)</name>
        <dbReference type="ChEBI" id="CHEBI:29108"/>
        <label>2</label>
    </ligand>
</feature>
<feature type="binding site">
    <location>
        <position position="280"/>
    </location>
    <ligand>
        <name>Ca(2+)</name>
        <dbReference type="ChEBI" id="CHEBI:29108"/>
        <label>1</label>
    </ligand>
</feature>
<feature type="binding site">
    <location>
        <position position="282"/>
    </location>
    <ligand>
        <name>Ca(2+)</name>
        <dbReference type="ChEBI" id="CHEBI:29108"/>
        <label>1</label>
    </ligand>
</feature>
<feature type="binding site">
    <location>
        <position position="305"/>
    </location>
    <ligand>
        <name>Ca(2+)</name>
        <dbReference type="ChEBI" id="CHEBI:29108"/>
        <label>1</label>
    </ligand>
</feature>
<feature type="binding site">
    <location>
        <position position="365"/>
    </location>
    <ligand>
        <name>Ca(2+)</name>
        <dbReference type="ChEBI" id="CHEBI:29108"/>
        <label>2</label>
    </ligand>
</feature>
<feature type="disulfide bond">
    <location>
        <begin position="139"/>
        <end position="228"/>
    </location>
</feature>
<feature type="disulfide bond">
    <location>
        <begin position="283"/>
        <end position="354"/>
    </location>
</feature>
<feature type="sequence conflict" description="In Ref. 2; AA sequence and 3; AA sequence." evidence="5" ref="2 3">
    <original>S</original>
    <variation>SG</variation>
    <location>
        <position position="184"/>
    </location>
</feature>
<feature type="sequence conflict" description="In Ref. 2; AA sequence, 3; AA sequence and 4; AA sequence." evidence="5" ref="2 3 4">
    <original>SILST</original>
    <variation>DLS</variation>
    <location>
        <begin position="312"/>
        <end position="316"/>
    </location>
</feature>
<feature type="sequence conflict" description="In Ref. 2; AA sequence." evidence="5" ref="2">
    <original>V</original>
    <variation>F</variation>
    <location>
        <position position="374"/>
    </location>
</feature>
<feature type="sequence conflict" description="In Ref. 2; AA sequence and 3; AA sequence." evidence="5" ref="2 3">
    <location>
        <position position="377"/>
    </location>
</feature>
<feature type="strand" evidence="8">
    <location>
        <begin position="107"/>
        <end position="109"/>
    </location>
</feature>
<feature type="helix" evidence="6">
    <location>
        <begin position="113"/>
        <end position="118"/>
    </location>
</feature>
<feature type="strand" evidence="11">
    <location>
        <begin position="121"/>
        <end position="124"/>
    </location>
</feature>
<feature type="strand" evidence="8">
    <location>
        <begin position="127"/>
        <end position="129"/>
    </location>
</feature>
<feature type="turn" evidence="6">
    <location>
        <begin position="132"/>
        <end position="137"/>
    </location>
</feature>
<feature type="strand" evidence="6">
    <location>
        <begin position="138"/>
        <end position="145"/>
    </location>
</feature>
<feature type="helix" evidence="6">
    <location>
        <begin position="152"/>
        <end position="154"/>
    </location>
</feature>
<feature type="strand" evidence="6">
    <location>
        <begin position="158"/>
        <end position="166"/>
    </location>
</feature>
<feature type="strand" evidence="6">
    <location>
        <begin position="171"/>
        <end position="173"/>
    </location>
</feature>
<feature type="helix" evidence="6">
    <location>
        <begin position="174"/>
        <end position="183"/>
    </location>
</feature>
<feature type="turn" evidence="6">
    <location>
        <begin position="185"/>
        <end position="187"/>
    </location>
</feature>
<feature type="strand" evidence="6">
    <location>
        <begin position="194"/>
        <end position="199"/>
    </location>
</feature>
<feature type="strand" evidence="12">
    <location>
        <begin position="205"/>
        <end position="208"/>
    </location>
</feature>
<feature type="helix" evidence="6">
    <location>
        <begin position="209"/>
        <end position="222"/>
    </location>
</feature>
<feature type="helix" evidence="6">
    <location>
        <begin position="223"/>
        <end position="225"/>
    </location>
</feature>
<feature type="strand" evidence="6">
    <location>
        <begin position="231"/>
        <end position="236"/>
    </location>
</feature>
<feature type="strand" evidence="7">
    <location>
        <begin position="238"/>
        <end position="241"/>
    </location>
</feature>
<feature type="helix" evidence="6">
    <location>
        <begin position="244"/>
        <end position="255"/>
    </location>
</feature>
<feature type="strand" evidence="6">
    <location>
        <begin position="258"/>
        <end position="263"/>
    </location>
</feature>
<feature type="strand" evidence="6">
    <location>
        <begin position="266"/>
        <end position="270"/>
    </location>
</feature>
<feature type="helix" evidence="6">
    <location>
        <begin position="271"/>
        <end position="273"/>
    </location>
</feature>
<feature type="turn" evidence="6">
    <location>
        <begin position="276"/>
        <end position="278"/>
    </location>
</feature>
<feature type="strand" evidence="6">
    <location>
        <begin position="282"/>
        <end position="288"/>
    </location>
</feature>
<feature type="strand" evidence="6">
    <location>
        <begin position="292"/>
        <end position="294"/>
    </location>
</feature>
<feature type="strand" evidence="10">
    <location>
        <begin position="300"/>
        <end position="303"/>
    </location>
</feature>
<feature type="strand" evidence="6">
    <location>
        <begin position="306"/>
        <end position="309"/>
    </location>
</feature>
<feature type="strand" evidence="6">
    <location>
        <begin position="311"/>
        <end position="317"/>
    </location>
</feature>
<feature type="turn" evidence="6">
    <location>
        <begin position="318"/>
        <end position="320"/>
    </location>
</feature>
<feature type="strand" evidence="6">
    <location>
        <begin position="321"/>
        <end position="325"/>
    </location>
</feature>
<feature type="helix" evidence="6">
    <location>
        <begin position="328"/>
        <end position="344"/>
    </location>
</feature>
<feature type="turn" evidence="6">
    <location>
        <begin position="350"/>
        <end position="352"/>
    </location>
</feature>
<feature type="helix" evidence="6">
    <location>
        <begin position="353"/>
        <end position="360"/>
    </location>
</feature>
<feature type="strand" evidence="6">
    <location>
        <begin position="361"/>
        <end position="364"/>
    </location>
</feature>
<feature type="strand" evidence="9">
    <location>
        <begin position="371"/>
        <end position="373"/>
    </location>
</feature>
<organism>
    <name type="scientific">Parengyodontium album</name>
    <name type="common">Tritirachium album</name>
    <dbReference type="NCBI Taxonomy" id="37998"/>
    <lineage>
        <taxon>Eukaryota</taxon>
        <taxon>Fungi</taxon>
        <taxon>Dikarya</taxon>
        <taxon>Ascomycota</taxon>
        <taxon>Pezizomycotina</taxon>
        <taxon>Sordariomycetes</taxon>
        <taxon>Hypocreomycetidae</taxon>
        <taxon>Hypocreales</taxon>
        <taxon>Cordycipitaceae</taxon>
        <taxon>Parengyodontium</taxon>
    </lineage>
</organism>
<accession>P06873</accession>
<gene>
    <name type="primary">PROK</name>
</gene>
<evidence type="ECO:0000255" key="1"/>
<evidence type="ECO:0000255" key="2">
    <source>
        <dbReference type="PROSITE-ProRule" id="PRU01240"/>
    </source>
</evidence>
<evidence type="ECO:0000269" key="3">
    <source ref="2"/>
</evidence>
<evidence type="ECO:0000269" key="4">
    <source ref="3"/>
</evidence>
<evidence type="ECO:0000305" key="5"/>
<evidence type="ECO:0007829" key="6">
    <source>
        <dbReference type="PDB" id="2PWA"/>
    </source>
</evidence>
<evidence type="ECO:0007829" key="7">
    <source>
        <dbReference type="PDB" id="4ZAR"/>
    </source>
</evidence>
<evidence type="ECO:0007829" key="8">
    <source>
        <dbReference type="PDB" id="5ROS"/>
    </source>
</evidence>
<evidence type="ECO:0007829" key="9">
    <source>
        <dbReference type="PDB" id="6CLA"/>
    </source>
</evidence>
<evidence type="ECO:0007829" key="10">
    <source>
        <dbReference type="PDB" id="6PKK"/>
    </source>
</evidence>
<evidence type="ECO:0007829" key="11">
    <source>
        <dbReference type="PDB" id="7LTD"/>
    </source>
</evidence>
<evidence type="ECO:0007829" key="12">
    <source>
        <dbReference type="PDB" id="8SPL"/>
    </source>
</evidence>
<protein>
    <recommendedName>
        <fullName>Proteinase K</fullName>
        <ecNumber>3.4.21.64</ecNumber>
    </recommendedName>
    <alternativeName>
        <fullName>Endopeptidase K</fullName>
    </alternativeName>
    <alternativeName>
        <fullName>Tritirachium alkaline proteinase</fullName>
    </alternativeName>
</protein>
<keyword id="KW-0002">3D-structure</keyword>
<keyword id="KW-0106">Calcium</keyword>
<keyword id="KW-0903">Direct protein sequencing</keyword>
<keyword id="KW-1015">Disulfide bond</keyword>
<keyword id="KW-0378">Hydrolase</keyword>
<keyword id="KW-0479">Metal-binding</keyword>
<keyword id="KW-0645">Protease</keyword>
<keyword id="KW-0720">Serine protease</keyword>
<keyword id="KW-0732">Signal</keyword>
<keyword id="KW-0865">Zymogen</keyword>
<reference key="1">
    <citation type="journal article" date="1989" name="Eur. J. Biochem.">
        <title>Proteinase K from Tritirachium album Limber. Characterization of the chromosomal gene and expression of the cDNA in Escherichia coli.</title>
        <authorList>
            <person name="Gunkel F.A."/>
            <person name="Gassen H.G."/>
        </authorList>
    </citation>
    <scope>NUCLEOTIDE SEQUENCE [GENOMIC DNA / MRNA]</scope>
    <source>
        <strain>ATCC 22563 / Limber</strain>
    </source>
</reference>
<reference key="2">
    <citation type="journal article" date="1986" name="Biol. Chem. Hoppe-Seyler">
        <title>Proteinase K - a new subclass of the subtilisins. The amino acid sequence of the enzyme.</title>
        <authorList>
            <person name="Jany K.-D."/>
            <person name="Lederer G."/>
            <person name="Mayer B."/>
        </authorList>
    </citation>
    <scope>PROTEIN SEQUENCE OF 106-384</scope>
</reference>
<reference key="3">
    <citation type="journal article" date="1986" name="FEBS Lett.">
        <title>Amino acid sequence of proteinase K from the mold Tritirachium album limber. Proteinase K - a subtilisin-related enzyme with disulfide bonds.</title>
        <authorList>
            <person name="Jany K.-D."/>
            <person name="Lederer G."/>
            <person name="Mayer B."/>
        </authorList>
    </citation>
    <scope>PROTEIN SEQUENCE OF 106-384</scope>
</reference>
<reference key="4">
    <citation type="journal article" date="1985" name="Biol. Chem. Hoppe-Seyler">
        <title>Proteinase K from Tritirachium album limber. I. Molecular mass and sequence around the active site serine residue.</title>
        <authorList>
            <person name="Jany K.-D."/>
            <person name="Mayer B."/>
        </authorList>
    </citation>
    <scope>PROTEIN SEQUENCE OF 259-343</scope>
</reference>
<reference key="5">
    <citation type="journal article" date="1984" name="EMBO J.">
        <title>Three-dimensional structure of fungal proteinase K reveals similarity to bacterial subtilisin.</title>
        <authorList>
            <person name="Paehler A."/>
            <person name="Banerjee A."/>
            <person name="Dattagupta J.K."/>
            <person name="Fujiwara T."/>
            <person name="Lindner K."/>
            <person name="Pal G.P."/>
            <person name="Suck D."/>
            <person name="Weber G."/>
            <person name="Saenger W."/>
        </authorList>
    </citation>
    <scope>X-RAY CRYSTALLOGRAPHY (3.3 ANGSTROMS)</scope>
</reference>
<reference key="6">
    <citation type="journal article" date="1994" name="J. Biol. Chem.">
        <title>Crystal structure of calcium-free proteinase K at 1.5-A resolution.</title>
        <authorList>
            <person name="Mueller A."/>
            <person name="Hinrichs W."/>
            <person name="Wolf W.M."/>
            <person name="Saenger W."/>
        </authorList>
    </citation>
    <scope>X-RAY CRYSTALLOGRAPHY (1.5 ANGSTROMS)</scope>
</reference>
<reference key="7">
    <citation type="journal article" date="1998" name="Proteins">
        <title>Crystal structure of a complex formed between proteolytically-generated lactoferrin fragment and proteinase K.</title>
        <authorList>
            <person name="Singh T.P."/>
            <person name="Sharma S."/>
            <person name="Karthikeyan S."/>
            <person name="Betzel C."/>
            <person name="Bhatia K.L."/>
        </authorList>
    </citation>
    <scope>X-RAY CRYSTALLOGRAPHY (2.44 ANGSTROMS)</scope>
</reference>